<organism>
    <name type="scientific">Xanthomonas campestris pv. campestris (strain ATCC 33913 / DSM 3586 / NCPPB 528 / LMG 568 / P 25)</name>
    <dbReference type="NCBI Taxonomy" id="190485"/>
    <lineage>
        <taxon>Bacteria</taxon>
        <taxon>Pseudomonadati</taxon>
        <taxon>Pseudomonadota</taxon>
        <taxon>Gammaproteobacteria</taxon>
        <taxon>Lysobacterales</taxon>
        <taxon>Lysobacteraceae</taxon>
        <taxon>Xanthomonas</taxon>
    </lineage>
</organism>
<reference key="1">
    <citation type="journal article" date="2002" name="Nature">
        <title>Comparison of the genomes of two Xanthomonas pathogens with differing host specificities.</title>
        <authorList>
            <person name="da Silva A.C.R."/>
            <person name="Ferro J.A."/>
            <person name="Reinach F.C."/>
            <person name="Farah C.S."/>
            <person name="Furlan L.R."/>
            <person name="Quaggio R.B."/>
            <person name="Monteiro-Vitorello C.B."/>
            <person name="Van Sluys M.A."/>
            <person name="Almeida N.F. Jr."/>
            <person name="Alves L.M.C."/>
            <person name="do Amaral A.M."/>
            <person name="Bertolini M.C."/>
            <person name="Camargo L.E.A."/>
            <person name="Camarotte G."/>
            <person name="Cannavan F."/>
            <person name="Cardozo J."/>
            <person name="Chambergo F."/>
            <person name="Ciapina L.P."/>
            <person name="Cicarelli R.M.B."/>
            <person name="Coutinho L.L."/>
            <person name="Cursino-Santos J.R."/>
            <person name="El-Dorry H."/>
            <person name="Faria J.B."/>
            <person name="Ferreira A.J.S."/>
            <person name="Ferreira R.C.C."/>
            <person name="Ferro M.I.T."/>
            <person name="Formighieri E.F."/>
            <person name="Franco M.C."/>
            <person name="Greggio C.C."/>
            <person name="Gruber A."/>
            <person name="Katsuyama A.M."/>
            <person name="Kishi L.T."/>
            <person name="Leite R.P."/>
            <person name="Lemos E.G.M."/>
            <person name="Lemos M.V.F."/>
            <person name="Locali E.C."/>
            <person name="Machado M.A."/>
            <person name="Madeira A.M.B.N."/>
            <person name="Martinez-Rossi N.M."/>
            <person name="Martins E.C."/>
            <person name="Meidanis J."/>
            <person name="Menck C.F.M."/>
            <person name="Miyaki C.Y."/>
            <person name="Moon D.H."/>
            <person name="Moreira L.M."/>
            <person name="Novo M.T.M."/>
            <person name="Okura V.K."/>
            <person name="Oliveira M.C."/>
            <person name="Oliveira V.R."/>
            <person name="Pereira H.A."/>
            <person name="Rossi A."/>
            <person name="Sena J.A.D."/>
            <person name="Silva C."/>
            <person name="de Souza R.F."/>
            <person name="Spinola L.A.F."/>
            <person name="Takita M.A."/>
            <person name="Tamura R.E."/>
            <person name="Teixeira E.C."/>
            <person name="Tezza R.I.D."/>
            <person name="Trindade dos Santos M."/>
            <person name="Truffi D."/>
            <person name="Tsai S.M."/>
            <person name="White F.F."/>
            <person name="Setubal J.C."/>
            <person name="Kitajima J.P."/>
        </authorList>
    </citation>
    <scope>NUCLEOTIDE SEQUENCE [LARGE SCALE GENOMIC DNA]</scope>
    <source>
        <strain>ATCC 33913 / DSM 3586 / NCPPB 528 / LMG 568 / P 25</strain>
    </source>
</reference>
<sequence length="148" mass="16326">MNASNPCRRFPRSARVRTRAQYTVVFDTARRTSDPLLSLHWRSGETPPRLGMAVSRKVDTRAVGRNRIKRVLRDAMRHLLPELAGGDYVIVARSAAAKATNPQIRDAFVRLLRRAGALPLPAAPGTMPPARAPRPSSLSPTEPDPRSD</sequence>
<accession>Q8P337</accession>
<dbReference type="EC" id="3.1.26.5" evidence="1"/>
<dbReference type="EMBL" id="AE008922">
    <property type="protein sequence ID" value="AAM43457.1"/>
    <property type="molecule type" value="Genomic_DNA"/>
</dbReference>
<dbReference type="RefSeq" id="NP_639575.1">
    <property type="nucleotide sequence ID" value="NC_003902.1"/>
</dbReference>
<dbReference type="RefSeq" id="WP_011039302.1">
    <property type="nucleotide sequence ID" value="NC_003902.1"/>
</dbReference>
<dbReference type="SMR" id="Q8P337"/>
<dbReference type="STRING" id="190485.XCC4241"/>
<dbReference type="EnsemblBacteria" id="AAM43457">
    <property type="protein sequence ID" value="AAM43457"/>
    <property type="gene ID" value="XCC4241"/>
</dbReference>
<dbReference type="KEGG" id="xcc:XCC4241"/>
<dbReference type="PATRIC" id="fig|190485.4.peg.4554"/>
<dbReference type="eggNOG" id="COG0594">
    <property type="taxonomic scope" value="Bacteria"/>
</dbReference>
<dbReference type="HOGENOM" id="CLU_117179_3_0_6"/>
<dbReference type="OrthoDB" id="9796422at2"/>
<dbReference type="Proteomes" id="UP000001010">
    <property type="component" value="Chromosome"/>
</dbReference>
<dbReference type="GO" id="GO:0030677">
    <property type="term" value="C:ribonuclease P complex"/>
    <property type="evidence" value="ECO:0000318"/>
    <property type="project" value="GO_Central"/>
</dbReference>
<dbReference type="GO" id="GO:0042781">
    <property type="term" value="F:3'-tRNA processing endoribonuclease activity"/>
    <property type="evidence" value="ECO:0000318"/>
    <property type="project" value="GO_Central"/>
</dbReference>
<dbReference type="GO" id="GO:0004526">
    <property type="term" value="F:ribonuclease P activity"/>
    <property type="evidence" value="ECO:0000318"/>
    <property type="project" value="GO_Central"/>
</dbReference>
<dbReference type="GO" id="GO:0000049">
    <property type="term" value="F:tRNA binding"/>
    <property type="evidence" value="ECO:0007669"/>
    <property type="project" value="UniProtKB-UniRule"/>
</dbReference>
<dbReference type="GO" id="GO:0042780">
    <property type="term" value="P:tRNA 3'-end processing"/>
    <property type="evidence" value="ECO:0000318"/>
    <property type="project" value="GO_Central"/>
</dbReference>
<dbReference type="GO" id="GO:0001682">
    <property type="term" value="P:tRNA 5'-leader removal"/>
    <property type="evidence" value="ECO:0007669"/>
    <property type="project" value="UniProtKB-UniRule"/>
</dbReference>
<dbReference type="FunFam" id="3.30.230.10:FF:000082">
    <property type="entry name" value="Ribonuclease P protein component"/>
    <property type="match status" value="1"/>
</dbReference>
<dbReference type="Gene3D" id="3.30.230.10">
    <property type="match status" value="1"/>
</dbReference>
<dbReference type="HAMAP" id="MF_00227">
    <property type="entry name" value="RNase_P"/>
    <property type="match status" value="1"/>
</dbReference>
<dbReference type="InterPro" id="IPR020568">
    <property type="entry name" value="Ribosomal_Su5_D2-typ_SF"/>
</dbReference>
<dbReference type="InterPro" id="IPR014721">
    <property type="entry name" value="Ribsml_uS5_D2-typ_fold_subgr"/>
</dbReference>
<dbReference type="InterPro" id="IPR000100">
    <property type="entry name" value="RNase_P"/>
</dbReference>
<dbReference type="InterPro" id="IPR020539">
    <property type="entry name" value="RNase_P_CS"/>
</dbReference>
<dbReference type="NCBIfam" id="TIGR00188">
    <property type="entry name" value="rnpA"/>
    <property type="match status" value="1"/>
</dbReference>
<dbReference type="PANTHER" id="PTHR33992">
    <property type="entry name" value="RIBONUCLEASE P PROTEIN COMPONENT"/>
    <property type="match status" value="1"/>
</dbReference>
<dbReference type="PANTHER" id="PTHR33992:SF1">
    <property type="entry name" value="RIBONUCLEASE P PROTEIN COMPONENT"/>
    <property type="match status" value="1"/>
</dbReference>
<dbReference type="Pfam" id="PF00825">
    <property type="entry name" value="Ribonuclease_P"/>
    <property type="match status" value="1"/>
</dbReference>
<dbReference type="SUPFAM" id="SSF54211">
    <property type="entry name" value="Ribosomal protein S5 domain 2-like"/>
    <property type="match status" value="1"/>
</dbReference>
<dbReference type="PROSITE" id="PS00648">
    <property type="entry name" value="RIBONUCLEASE_P"/>
    <property type="match status" value="1"/>
</dbReference>
<evidence type="ECO:0000255" key="1">
    <source>
        <dbReference type="HAMAP-Rule" id="MF_00227"/>
    </source>
</evidence>
<evidence type="ECO:0000256" key="2">
    <source>
        <dbReference type="SAM" id="MobiDB-lite"/>
    </source>
</evidence>
<feature type="chain" id="PRO_0000198568" description="Ribonuclease P protein component">
    <location>
        <begin position="1"/>
        <end position="148"/>
    </location>
</feature>
<feature type="region of interest" description="Disordered" evidence="2">
    <location>
        <begin position="119"/>
        <end position="148"/>
    </location>
</feature>
<name>RNPA_XANCP</name>
<keyword id="KW-0255">Endonuclease</keyword>
<keyword id="KW-0378">Hydrolase</keyword>
<keyword id="KW-0540">Nuclease</keyword>
<keyword id="KW-1185">Reference proteome</keyword>
<keyword id="KW-0694">RNA-binding</keyword>
<keyword id="KW-0819">tRNA processing</keyword>
<gene>
    <name evidence="1" type="primary">rnpA</name>
    <name type="ordered locus">XCC4241</name>
</gene>
<proteinExistence type="inferred from homology"/>
<protein>
    <recommendedName>
        <fullName evidence="1">Ribonuclease P protein component</fullName>
        <shortName evidence="1">RNase P protein</shortName>
        <shortName evidence="1">RNaseP protein</shortName>
        <ecNumber evidence="1">3.1.26.5</ecNumber>
    </recommendedName>
    <alternativeName>
        <fullName evidence="1">Protein C5</fullName>
    </alternativeName>
</protein>
<comment type="function">
    <text evidence="1">RNaseP catalyzes the removal of the 5'-leader sequence from pre-tRNA to produce the mature 5'-terminus. It can also cleave other RNA substrates such as 4.5S RNA. The protein component plays an auxiliary but essential role in vivo by binding to the 5'-leader sequence and broadening the substrate specificity of the ribozyme.</text>
</comment>
<comment type="catalytic activity">
    <reaction evidence="1">
        <text>Endonucleolytic cleavage of RNA, removing 5'-extranucleotides from tRNA precursor.</text>
        <dbReference type="EC" id="3.1.26.5"/>
    </reaction>
</comment>
<comment type="subunit">
    <text evidence="1">Consists of a catalytic RNA component (M1 or rnpB) and a protein subunit.</text>
</comment>
<comment type="similarity">
    <text evidence="1">Belongs to the RnpA family.</text>
</comment>